<accession>Q63US0</accession>
<evidence type="ECO:0000255" key="1">
    <source>
        <dbReference type="HAMAP-Rule" id="MF_01522"/>
    </source>
</evidence>
<reference key="1">
    <citation type="journal article" date="2004" name="Proc. Natl. Acad. Sci. U.S.A.">
        <title>Genomic plasticity of the causative agent of melioidosis, Burkholderia pseudomallei.</title>
        <authorList>
            <person name="Holden M.T.G."/>
            <person name="Titball R.W."/>
            <person name="Peacock S.J."/>
            <person name="Cerdeno-Tarraga A.-M."/>
            <person name="Atkins T."/>
            <person name="Crossman L.C."/>
            <person name="Pitt T."/>
            <person name="Churcher C."/>
            <person name="Mungall K.L."/>
            <person name="Bentley S.D."/>
            <person name="Sebaihia M."/>
            <person name="Thomson N.R."/>
            <person name="Bason N."/>
            <person name="Beacham I.R."/>
            <person name="Brooks K."/>
            <person name="Brown K.A."/>
            <person name="Brown N.F."/>
            <person name="Challis G.L."/>
            <person name="Cherevach I."/>
            <person name="Chillingworth T."/>
            <person name="Cronin A."/>
            <person name="Crossett B."/>
            <person name="Davis P."/>
            <person name="DeShazer D."/>
            <person name="Feltwell T."/>
            <person name="Fraser A."/>
            <person name="Hance Z."/>
            <person name="Hauser H."/>
            <person name="Holroyd S."/>
            <person name="Jagels K."/>
            <person name="Keith K.E."/>
            <person name="Maddison M."/>
            <person name="Moule S."/>
            <person name="Price C."/>
            <person name="Quail M.A."/>
            <person name="Rabbinowitsch E."/>
            <person name="Rutherford K."/>
            <person name="Sanders M."/>
            <person name="Simmonds M."/>
            <person name="Songsivilai S."/>
            <person name="Stevens K."/>
            <person name="Tumapa S."/>
            <person name="Vesaratchavest M."/>
            <person name="Whitehead S."/>
            <person name="Yeats C."/>
            <person name="Barrell B.G."/>
            <person name="Oyston P.C.F."/>
            <person name="Parkhill J."/>
        </authorList>
    </citation>
    <scope>NUCLEOTIDE SEQUENCE [LARGE SCALE GENOMIC DNA]</scope>
    <source>
        <strain>K96243</strain>
    </source>
</reference>
<proteinExistence type="inferred from homology"/>
<organism>
    <name type="scientific">Burkholderia pseudomallei (strain K96243)</name>
    <dbReference type="NCBI Taxonomy" id="272560"/>
    <lineage>
        <taxon>Bacteria</taxon>
        <taxon>Pseudomonadati</taxon>
        <taxon>Pseudomonadota</taxon>
        <taxon>Betaproteobacteria</taxon>
        <taxon>Burkholderiales</taxon>
        <taxon>Burkholderiaceae</taxon>
        <taxon>Burkholderia</taxon>
        <taxon>pseudomallei group</taxon>
    </lineage>
</organism>
<protein>
    <recommendedName>
        <fullName evidence="1">Probable potassium transport system protein Kup</fullName>
    </recommendedName>
</protein>
<feature type="chain" id="PRO_0000209005" description="Probable potassium transport system protein Kup">
    <location>
        <begin position="1"/>
        <end position="630"/>
    </location>
</feature>
<feature type="transmembrane region" description="Helical" evidence="1">
    <location>
        <begin position="17"/>
        <end position="37"/>
    </location>
</feature>
<feature type="transmembrane region" description="Helical" evidence="1">
    <location>
        <begin position="51"/>
        <end position="71"/>
    </location>
</feature>
<feature type="transmembrane region" description="Helical" evidence="1">
    <location>
        <begin position="105"/>
        <end position="125"/>
    </location>
</feature>
<feature type="transmembrane region" description="Helical" evidence="1">
    <location>
        <begin position="144"/>
        <end position="164"/>
    </location>
</feature>
<feature type="transmembrane region" description="Helical" evidence="1">
    <location>
        <begin position="175"/>
        <end position="195"/>
    </location>
</feature>
<feature type="transmembrane region" description="Helical" evidence="1">
    <location>
        <begin position="218"/>
        <end position="238"/>
    </location>
</feature>
<feature type="transmembrane region" description="Helical" evidence="1">
    <location>
        <begin position="255"/>
        <end position="275"/>
    </location>
</feature>
<feature type="transmembrane region" description="Helical" evidence="1">
    <location>
        <begin position="283"/>
        <end position="303"/>
    </location>
</feature>
<feature type="transmembrane region" description="Helical" evidence="1">
    <location>
        <begin position="344"/>
        <end position="364"/>
    </location>
</feature>
<feature type="transmembrane region" description="Helical" evidence="1">
    <location>
        <begin position="374"/>
        <end position="394"/>
    </location>
</feature>
<feature type="transmembrane region" description="Helical" evidence="1">
    <location>
        <begin position="402"/>
        <end position="422"/>
    </location>
</feature>
<feature type="transmembrane region" description="Helical" evidence="1">
    <location>
        <begin position="428"/>
        <end position="448"/>
    </location>
</feature>
<sequence>MTDTNHSSMRQHSLQSLAIAAIGVVFGDIGTSPLYSLKEAFSPAHGIPLTPSAILGVISLLFWAIILVVGIKYVLFVMRADNNGEGGVLALMALSLRPLNPKSRITGLMMALGIFGACMFYGDAVITPAISVMSAVEGLEVATPQLSHLVLPITIVILIALFWIQRHGTATVGKLFGPIMVLWFVTIAVLGIYHIARAPMIVSAINPYYAFSFMSEHVLLAYVVLGSVVLVLTGAEALYADMGHFGAKPIRLAAYVLVMPSLVLNYFGQGALLLLDPKAIENPFFLLAPQWAALPLVVLSTVATVIASQAVISGAYSLTSQAIQLGYVPRMKILHTSELAIGQIYVPVVNWLLLFVILCIVIGFKSSDNLAAAYGIAVTATMVITTILAAVVMVKVWNWNKLLVAMIIGVFLVIDLGFFGANLLKVEQGGWLPLGIGALLFFLLMTWYKGRHIVKERTAADGIPLAPFLQGLLAHPPHRVSGTAIYLTGNDTLVPVSLLHNLKHNKVLHERTIFMTFVTRDIPYVKDHERVTVHDAGEGLYIVKAEYGFNETPDVKAVLEEVARQRGMTFELMDTSFFLARETVVPTHLPGMSIWRERVFAWMHQNAAKPTDFFAIPANRVVELGTKIEI</sequence>
<dbReference type="EMBL" id="BX571965">
    <property type="protein sequence ID" value="CAH35527.1"/>
    <property type="molecule type" value="Genomic_DNA"/>
</dbReference>
<dbReference type="RefSeq" id="WP_004550348.1">
    <property type="nucleotide sequence ID" value="NZ_CP009538.1"/>
</dbReference>
<dbReference type="RefSeq" id="YP_108146.1">
    <property type="nucleotide sequence ID" value="NC_006350.1"/>
</dbReference>
<dbReference type="STRING" id="272560.BPSL1526"/>
<dbReference type="KEGG" id="bps:BPSL1526"/>
<dbReference type="PATRIC" id="fig|272560.51.peg.3565"/>
<dbReference type="eggNOG" id="COG3158">
    <property type="taxonomic scope" value="Bacteria"/>
</dbReference>
<dbReference type="Proteomes" id="UP000000605">
    <property type="component" value="Chromosome 1"/>
</dbReference>
<dbReference type="GO" id="GO:0005886">
    <property type="term" value="C:plasma membrane"/>
    <property type="evidence" value="ECO:0007669"/>
    <property type="project" value="UniProtKB-SubCell"/>
</dbReference>
<dbReference type="GO" id="GO:0015079">
    <property type="term" value="F:potassium ion transmembrane transporter activity"/>
    <property type="evidence" value="ECO:0007669"/>
    <property type="project" value="UniProtKB-UniRule"/>
</dbReference>
<dbReference type="GO" id="GO:0015293">
    <property type="term" value="F:symporter activity"/>
    <property type="evidence" value="ECO:0007669"/>
    <property type="project" value="UniProtKB-UniRule"/>
</dbReference>
<dbReference type="HAMAP" id="MF_01522">
    <property type="entry name" value="Kup"/>
    <property type="match status" value="1"/>
</dbReference>
<dbReference type="InterPro" id="IPR003855">
    <property type="entry name" value="K+_transporter"/>
</dbReference>
<dbReference type="InterPro" id="IPR053952">
    <property type="entry name" value="K_trans_C"/>
</dbReference>
<dbReference type="InterPro" id="IPR053951">
    <property type="entry name" value="K_trans_N"/>
</dbReference>
<dbReference type="InterPro" id="IPR023051">
    <property type="entry name" value="Kup"/>
</dbReference>
<dbReference type="PANTHER" id="PTHR30540:SF79">
    <property type="entry name" value="LOW AFFINITY POTASSIUM TRANSPORT SYSTEM PROTEIN KUP"/>
    <property type="match status" value="1"/>
</dbReference>
<dbReference type="PANTHER" id="PTHR30540">
    <property type="entry name" value="OSMOTIC STRESS POTASSIUM TRANSPORTER"/>
    <property type="match status" value="1"/>
</dbReference>
<dbReference type="Pfam" id="PF02705">
    <property type="entry name" value="K_trans"/>
    <property type="match status" value="1"/>
</dbReference>
<dbReference type="Pfam" id="PF22776">
    <property type="entry name" value="K_trans_C"/>
    <property type="match status" value="1"/>
</dbReference>
<keyword id="KW-0997">Cell inner membrane</keyword>
<keyword id="KW-1003">Cell membrane</keyword>
<keyword id="KW-0406">Ion transport</keyword>
<keyword id="KW-0472">Membrane</keyword>
<keyword id="KW-0630">Potassium</keyword>
<keyword id="KW-0633">Potassium transport</keyword>
<keyword id="KW-1185">Reference proteome</keyword>
<keyword id="KW-0769">Symport</keyword>
<keyword id="KW-0812">Transmembrane</keyword>
<keyword id="KW-1133">Transmembrane helix</keyword>
<keyword id="KW-0813">Transport</keyword>
<gene>
    <name evidence="1" type="primary">kup</name>
    <name type="synonym">trkD</name>
    <name type="ordered locus">BPSL1526</name>
</gene>
<name>KUP_BURPS</name>
<comment type="function">
    <text evidence="1">Transport of potassium into the cell. Likely operates as a K(+):H(+) symporter.</text>
</comment>
<comment type="catalytic activity">
    <reaction evidence="1">
        <text>K(+)(in) + H(+)(in) = K(+)(out) + H(+)(out)</text>
        <dbReference type="Rhea" id="RHEA:28490"/>
        <dbReference type="ChEBI" id="CHEBI:15378"/>
        <dbReference type="ChEBI" id="CHEBI:29103"/>
    </reaction>
    <physiologicalReaction direction="right-to-left" evidence="1">
        <dbReference type="Rhea" id="RHEA:28492"/>
    </physiologicalReaction>
</comment>
<comment type="subcellular location">
    <subcellularLocation>
        <location evidence="1">Cell inner membrane</location>
        <topology evidence="1">Multi-pass membrane protein</topology>
    </subcellularLocation>
</comment>
<comment type="similarity">
    <text evidence="1">Belongs to the HAK/KUP transporter (TC 2.A.72) family.</text>
</comment>